<feature type="chain" id="PRO_0000246964" description="7-cyano-7-deazaguanine synthase">
    <location>
        <begin position="1"/>
        <end position="224"/>
    </location>
</feature>
<feature type="binding site" evidence="1">
    <location>
        <begin position="8"/>
        <end position="18"/>
    </location>
    <ligand>
        <name>ATP</name>
        <dbReference type="ChEBI" id="CHEBI:30616"/>
    </ligand>
</feature>
<feature type="binding site" evidence="1">
    <location>
        <position position="186"/>
    </location>
    <ligand>
        <name>Zn(2+)</name>
        <dbReference type="ChEBI" id="CHEBI:29105"/>
    </ligand>
</feature>
<feature type="binding site" evidence="1">
    <location>
        <position position="196"/>
    </location>
    <ligand>
        <name>Zn(2+)</name>
        <dbReference type="ChEBI" id="CHEBI:29105"/>
    </ligand>
</feature>
<feature type="binding site" evidence="1">
    <location>
        <position position="199"/>
    </location>
    <ligand>
        <name>Zn(2+)</name>
        <dbReference type="ChEBI" id="CHEBI:29105"/>
    </ligand>
</feature>
<feature type="binding site" evidence="1">
    <location>
        <position position="202"/>
    </location>
    <ligand>
        <name>Zn(2+)</name>
        <dbReference type="ChEBI" id="CHEBI:29105"/>
    </ligand>
</feature>
<reference key="1">
    <citation type="journal article" date="2005" name="J. Bacteriol.">
        <title>Insights into genome plasticity and pathogenicity of the plant pathogenic Bacterium Xanthomonas campestris pv. vesicatoria revealed by the complete genome sequence.</title>
        <authorList>
            <person name="Thieme F."/>
            <person name="Koebnik R."/>
            <person name="Bekel T."/>
            <person name="Berger C."/>
            <person name="Boch J."/>
            <person name="Buettner D."/>
            <person name="Caldana C."/>
            <person name="Gaigalat L."/>
            <person name="Goesmann A."/>
            <person name="Kay S."/>
            <person name="Kirchner O."/>
            <person name="Lanz C."/>
            <person name="Linke B."/>
            <person name="McHardy A.C."/>
            <person name="Meyer F."/>
            <person name="Mittenhuber G."/>
            <person name="Nies D.H."/>
            <person name="Niesbach-Kloesgen U."/>
            <person name="Patschkowski T."/>
            <person name="Rueckert C."/>
            <person name="Rupp O."/>
            <person name="Schneiker S."/>
            <person name="Schuster S.C."/>
            <person name="Vorhoelter F.J."/>
            <person name="Weber E."/>
            <person name="Puehler A."/>
            <person name="Bonas U."/>
            <person name="Bartels D."/>
            <person name="Kaiser O."/>
        </authorList>
    </citation>
    <scope>NUCLEOTIDE SEQUENCE [LARGE SCALE GENOMIC DNA]</scope>
    <source>
        <strain>85-10</strain>
    </source>
</reference>
<proteinExistence type="inferred from homology"/>
<accession>Q3BQG4</accession>
<comment type="function">
    <text evidence="1">Catalyzes the ATP-dependent conversion of 7-carboxy-7-deazaguanine (CDG) to 7-cyano-7-deazaguanine (preQ(0)).</text>
</comment>
<comment type="catalytic activity">
    <reaction evidence="1">
        <text>7-carboxy-7-deazaguanine + NH4(+) + ATP = 7-cyano-7-deazaguanine + ADP + phosphate + H2O + H(+)</text>
        <dbReference type="Rhea" id="RHEA:27982"/>
        <dbReference type="ChEBI" id="CHEBI:15377"/>
        <dbReference type="ChEBI" id="CHEBI:15378"/>
        <dbReference type="ChEBI" id="CHEBI:28938"/>
        <dbReference type="ChEBI" id="CHEBI:30616"/>
        <dbReference type="ChEBI" id="CHEBI:43474"/>
        <dbReference type="ChEBI" id="CHEBI:45075"/>
        <dbReference type="ChEBI" id="CHEBI:61036"/>
        <dbReference type="ChEBI" id="CHEBI:456216"/>
        <dbReference type="EC" id="6.3.4.20"/>
    </reaction>
</comment>
<comment type="cofactor">
    <cofactor evidence="1">
        <name>Zn(2+)</name>
        <dbReference type="ChEBI" id="CHEBI:29105"/>
    </cofactor>
    <text evidence="1">Binds 1 zinc ion per subunit.</text>
</comment>
<comment type="pathway">
    <text evidence="1">Purine metabolism; 7-cyano-7-deazaguanine biosynthesis.</text>
</comment>
<comment type="similarity">
    <text evidence="1">Belongs to the QueC family.</text>
</comment>
<gene>
    <name evidence="1" type="primary">queC</name>
    <name type="ordered locus">XCV3268</name>
</gene>
<organism>
    <name type="scientific">Xanthomonas euvesicatoria pv. vesicatoria (strain 85-10)</name>
    <name type="common">Xanthomonas campestris pv. vesicatoria</name>
    <dbReference type="NCBI Taxonomy" id="316273"/>
    <lineage>
        <taxon>Bacteria</taxon>
        <taxon>Pseudomonadati</taxon>
        <taxon>Pseudomonadota</taxon>
        <taxon>Gammaproteobacteria</taxon>
        <taxon>Lysobacterales</taxon>
        <taxon>Lysobacteraceae</taxon>
        <taxon>Xanthomonas</taxon>
    </lineage>
</organism>
<dbReference type="EC" id="6.3.4.20" evidence="1"/>
<dbReference type="EMBL" id="AM039952">
    <property type="protein sequence ID" value="CAJ24999.1"/>
    <property type="molecule type" value="Genomic_DNA"/>
</dbReference>
<dbReference type="RefSeq" id="WP_011348271.1">
    <property type="nucleotide sequence ID" value="NZ_CP017190.1"/>
</dbReference>
<dbReference type="SMR" id="Q3BQG4"/>
<dbReference type="STRING" id="456327.BJD11_06430"/>
<dbReference type="KEGG" id="xcv:XCV3268"/>
<dbReference type="eggNOG" id="COG0603">
    <property type="taxonomic scope" value="Bacteria"/>
</dbReference>
<dbReference type="HOGENOM" id="CLU_081854_1_1_6"/>
<dbReference type="UniPathway" id="UPA00391"/>
<dbReference type="Proteomes" id="UP000007069">
    <property type="component" value="Chromosome"/>
</dbReference>
<dbReference type="GO" id="GO:0005524">
    <property type="term" value="F:ATP binding"/>
    <property type="evidence" value="ECO:0007669"/>
    <property type="project" value="UniProtKB-UniRule"/>
</dbReference>
<dbReference type="GO" id="GO:0016879">
    <property type="term" value="F:ligase activity, forming carbon-nitrogen bonds"/>
    <property type="evidence" value="ECO:0007669"/>
    <property type="project" value="UniProtKB-UniRule"/>
</dbReference>
<dbReference type="GO" id="GO:0008270">
    <property type="term" value="F:zinc ion binding"/>
    <property type="evidence" value="ECO:0007669"/>
    <property type="project" value="UniProtKB-UniRule"/>
</dbReference>
<dbReference type="GO" id="GO:0008616">
    <property type="term" value="P:queuosine biosynthetic process"/>
    <property type="evidence" value="ECO:0007669"/>
    <property type="project" value="UniProtKB-UniRule"/>
</dbReference>
<dbReference type="CDD" id="cd01995">
    <property type="entry name" value="QueC-like"/>
    <property type="match status" value="1"/>
</dbReference>
<dbReference type="FunFam" id="3.40.50.620:FF:000131">
    <property type="entry name" value="7-cyano-7-deazaguanine synthase"/>
    <property type="match status" value="1"/>
</dbReference>
<dbReference type="Gene3D" id="3.40.50.620">
    <property type="entry name" value="HUPs"/>
    <property type="match status" value="1"/>
</dbReference>
<dbReference type="HAMAP" id="MF_01633">
    <property type="entry name" value="QueC"/>
    <property type="match status" value="1"/>
</dbReference>
<dbReference type="InterPro" id="IPR018317">
    <property type="entry name" value="QueC"/>
</dbReference>
<dbReference type="InterPro" id="IPR014729">
    <property type="entry name" value="Rossmann-like_a/b/a_fold"/>
</dbReference>
<dbReference type="NCBIfam" id="TIGR00364">
    <property type="entry name" value="7-cyano-7-deazaguanine synthase QueC"/>
    <property type="match status" value="1"/>
</dbReference>
<dbReference type="PANTHER" id="PTHR42914">
    <property type="entry name" value="7-CYANO-7-DEAZAGUANINE SYNTHASE"/>
    <property type="match status" value="1"/>
</dbReference>
<dbReference type="PANTHER" id="PTHR42914:SF1">
    <property type="entry name" value="7-CYANO-7-DEAZAGUANINE SYNTHASE"/>
    <property type="match status" value="1"/>
</dbReference>
<dbReference type="Pfam" id="PF06508">
    <property type="entry name" value="QueC"/>
    <property type="match status" value="1"/>
</dbReference>
<dbReference type="PIRSF" id="PIRSF006293">
    <property type="entry name" value="ExsB"/>
    <property type="match status" value="1"/>
</dbReference>
<dbReference type="SUPFAM" id="SSF52402">
    <property type="entry name" value="Adenine nucleotide alpha hydrolases-like"/>
    <property type="match status" value="1"/>
</dbReference>
<evidence type="ECO:0000255" key="1">
    <source>
        <dbReference type="HAMAP-Rule" id="MF_01633"/>
    </source>
</evidence>
<sequence length="224" mass="23307">MKKAVVLLSGGMDSAAVIALAQEQGFAVYALSVRYGQRHTSELDAAARVAAAQGVVAHKVVDVDLRSIGGSALTDDIDVPDAGGDGIPVTYVPARNTIMLSLALGWAEVVGANDLFCGVNAVDYSGYPDCRPEFVRAFEVLANLATKAGVEGVGLRVHAPLQFLSKADIVREGVRLGVDFGLTVSCYRADADGRACGHCDACRLRAAGFSDAGVPDPTHYAILS</sequence>
<name>QUEC_XANE5</name>
<keyword id="KW-0067">ATP-binding</keyword>
<keyword id="KW-0436">Ligase</keyword>
<keyword id="KW-0479">Metal-binding</keyword>
<keyword id="KW-0547">Nucleotide-binding</keyword>
<keyword id="KW-0671">Queuosine biosynthesis</keyword>
<keyword id="KW-0862">Zinc</keyword>
<protein>
    <recommendedName>
        <fullName evidence="1">7-cyano-7-deazaguanine synthase</fullName>
        <ecNumber evidence="1">6.3.4.20</ecNumber>
    </recommendedName>
    <alternativeName>
        <fullName evidence="1">7-cyano-7-carbaguanine synthase</fullName>
    </alternativeName>
    <alternativeName>
        <fullName evidence="1">PreQ(0) synthase</fullName>
    </alternativeName>
    <alternativeName>
        <fullName evidence="1">Queuosine biosynthesis protein QueC</fullName>
    </alternativeName>
</protein>